<dbReference type="EMBL" id="CP000948">
    <property type="protein sequence ID" value="ACB03764.1"/>
    <property type="molecule type" value="Genomic_DNA"/>
</dbReference>
<dbReference type="RefSeq" id="WP_000162574.1">
    <property type="nucleotide sequence ID" value="NC_010473.1"/>
</dbReference>
<dbReference type="SMR" id="B1XBU0"/>
<dbReference type="GeneID" id="93774470"/>
<dbReference type="KEGG" id="ecd:ECDH10B_2786"/>
<dbReference type="HOGENOM" id="CLU_108953_3_0_6"/>
<dbReference type="GO" id="GO:0005829">
    <property type="term" value="C:cytosol"/>
    <property type="evidence" value="ECO:0007669"/>
    <property type="project" value="TreeGrafter"/>
</dbReference>
<dbReference type="GO" id="GO:0003723">
    <property type="term" value="F:RNA binding"/>
    <property type="evidence" value="ECO:0007669"/>
    <property type="project" value="UniProtKB-UniRule"/>
</dbReference>
<dbReference type="GO" id="GO:0070929">
    <property type="term" value="P:trans-translation"/>
    <property type="evidence" value="ECO:0007669"/>
    <property type="project" value="UniProtKB-UniRule"/>
</dbReference>
<dbReference type="CDD" id="cd09294">
    <property type="entry name" value="SmpB"/>
    <property type="match status" value="1"/>
</dbReference>
<dbReference type="FunFam" id="2.40.280.10:FF:000001">
    <property type="entry name" value="SsrA-binding protein"/>
    <property type="match status" value="1"/>
</dbReference>
<dbReference type="Gene3D" id="2.40.280.10">
    <property type="match status" value="1"/>
</dbReference>
<dbReference type="HAMAP" id="MF_00023">
    <property type="entry name" value="SmpB"/>
    <property type="match status" value="1"/>
</dbReference>
<dbReference type="InterPro" id="IPR023620">
    <property type="entry name" value="SmpB"/>
</dbReference>
<dbReference type="InterPro" id="IPR000037">
    <property type="entry name" value="SsrA-bd_prot"/>
</dbReference>
<dbReference type="InterPro" id="IPR020081">
    <property type="entry name" value="SsrA-bd_prot_CS"/>
</dbReference>
<dbReference type="NCBIfam" id="NF003843">
    <property type="entry name" value="PRK05422.1"/>
    <property type="match status" value="1"/>
</dbReference>
<dbReference type="NCBIfam" id="TIGR00086">
    <property type="entry name" value="smpB"/>
    <property type="match status" value="1"/>
</dbReference>
<dbReference type="PANTHER" id="PTHR30308:SF2">
    <property type="entry name" value="SSRA-BINDING PROTEIN"/>
    <property type="match status" value="1"/>
</dbReference>
<dbReference type="PANTHER" id="PTHR30308">
    <property type="entry name" value="TMRNA-BINDING COMPONENT OF TRANS-TRANSLATION TAGGING COMPLEX"/>
    <property type="match status" value="1"/>
</dbReference>
<dbReference type="Pfam" id="PF01668">
    <property type="entry name" value="SmpB"/>
    <property type="match status" value="1"/>
</dbReference>
<dbReference type="SUPFAM" id="SSF74982">
    <property type="entry name" value="Small protein B (SmpB)"/>
    <property type="match status" value="1"/>
</dbReference>
<dbReference type="PROSITE" id="PS01317">
    <property type="entry name" value="SSRP"/>
    <property type="match status" value="1"/>
</dbReference>
<sequence length="160" mass="18269">MTKKKAHKPGSATIALNKRARHEYFIEEEFEAGLALQGWEVKSLRAGKANISDSYVLLRDGEAFLFGANITPMAVASTHVVCDPTRTRKLLLNQRELDSLYGRVNREGYTVVALSLYWKNAWCKVKIGVAKGKKQHDKRSDIKEREWQVDKARIMKNAHR</sequence>
<keyword id="KW-0963">Cytoplasm</keyword>
<keyword id="KW-0694">RNA-binding</keyword>
<name>SSRP_ECODH</name>
<protein>
    <recommendedName>
        <fullName evidence="1">SsrA-binding protein</fullName>
    </recommendedName>
    <alternativeName>
        <fullName evidence="1">Small protein B</fullName>
    </alternativeName>
</protein>
<organism>
    <name type="scientific">Escherichia coli (strain K12 / DH10B)</name>
    <dbReference type="NCBI Taxonomy" id="316385"/>
    <lineage>
        <taxon>Bacteria</taxon>
        <taxon>Pseudomonadati</taxon>
        <taxon>Pseudomonadota</taxon>
        <taxon>Gammaproteobacteria</taxon>
        <taxon>Enterobacterales</taxon>
        <taxon>Enterobacteriaceae</taxon>
        <taxon>Escherichia</taxon>
    </lineage>
</organism>
<accession>B1XBU0</accession>
<gene>
    <name evidence="1" type="primary">smpB</name>
    <name type="ordered locus">ECDH10B_2786</name>
</gene>
<proteinExistence type="inferred from homology"/>
<feature type="chain" id="PRO_1000090148" description="SsrA-binding protein">
    <location>
        <begin position="1"/>
        <end position="160"/>
    </location>
</feature>
<evidence type="ECO:0000255" key="1">
    <source>
        <dbReference type="HAMAP-Rule" id="MF_00023"/>
    </source>
</evidence>
<comment type="function">
    <text evidence="1">Required for rescue of stalled ribosomes mediated by trans-translation. Binds to transfer-messenger RNA (tmRNA), required for stable association of tmRNA with ribosomes. tmRNA and SmpB together mimic tRNA shape, replacing the anticodon stem-loop with SmpB. tmRNA is encoded by the ssrA gene; the 2 termini fold to resemble tRNA(Ala) and it encodes a 'tag peptide', a short internal open reading frame. During trans-translation Ala-aminoacylated tmRNA acts like a tRNA, entering the A-site of stalled ribosomes, displacing the stalled mRNA. The ribosome then switches to translate the ORF on the tmRNA; the nascent peptide is terminated with the 'tag peptide' encoded by the tmRNA and targeted for degradation. The ribosome is freed to recommence translation, which seems to be the essential function of trans-translation.</text>
</comment>
<comment type="subcellular location">
    <subcellularLocation>
        <location evidence="1">Cytoplasm</location>
    </subcellularLocation>
    <text evidence="1">The tmRNA-SmpB complex associates with stalled 70S ribosomes.</text>
</comment>
<comment type="similarity">
    <text evidence="1">Belongs to the SmpB family.</text>
</comment>
<reference key="1">
    <citation type="journal article" date="2008" name="J. Bacteriol.">
        <title>The complete genome sequence of Escherichia coli DH10B: insights into the biology of a laboratory workhorse.</title>
        <authorList>
            <person name="Durfee T."/>
            <person name="Nelson R."/>
            <person name="Baldwin S."/>
            <person name="Plunkett G. III"/>
            <person name="Burland V."/>
            <person name="Mau B."/>
            <person name="Petrosino J.F."/>
            <person name="Qin X."/>
            <person name="Muzny D.M."/>
            <person name="Ayele M."/>
            <person name="Gibbs R.A."/>
            <person name="Csorgo B."/>
            <person name="Posfai G."/>
            <person name="Weinstock G.M."/>
            <person name="Blattner F.R."/>
        </authorList>
    </citation>
    <scope>NUCLEOTIDE SEQUENCE [LARGE SCALE GENOMIC DNA]</scope>
    <source>
        <strain>K12 / DH10B</strain>
    </source>
</reference>